<reference key="1">
    <citation type="journal article" date="2007" name="PLoS Genet.">
        <title>Patterns and implications of gene gain and loss in the evolution of Prochlorococcus.</title>
        <authorList>
            <person name="Kettler G.C."/>
            <person name="Martiny A.C."/>
            <person name="Huang K."/>
            <person name="Zucker J."/>
            <person name="Coleman M.L."/>
            <person name="Rodrigue S."/>
            <person name="Chen F."/>
            <person name="Lapidus A."/>
            <person name="Ferriera S."/>
            <person name="Johnson J."/>
            <person name="Steglich C."/>
            <person name="Church G.M."/>
            <person name="Richardson P."/>
            <person name="Chisholm S.W."/>
        </authorList>
    </citation>
    <scope>NUCLEOTIDE SEQUENCE [LARGE SCALE GENOMIC DNA]</scope>
    <source>
        <strain>MIT 9211</strain>
    </source>
</reference>
<dbReference type="EC" id="5.3.1.1" evidence="1"/>
<dbReference type="EMBL" id="CP000878">
    <property type="protein sequence ID" value="ABX08869.1"/>
    <property type="molecule type" value="Genomic_DNA"/>
</dbReference>
<dbReference type="RefSeq" id="WP_012195490.1">
    <property type="nucleotide sequence ID" value="NC_009976.1"/>
</dbReference>
<dbReference type="SMR" id="A9BAK7"/>
<dbReference type="STRING" id="93059.P9211_09381"/>
<dbReference type="KEGG" id="pmj:P9211_09381"/>
<dbReference type="eggNOG" id="COG0149">
    <property type="taxonomic scope" value="Bacteria"/>
</dbReference>
<dbReference type="HOGENOM" id="CLU_024251_2_3_3"/>
<dbReference type="OrthoDB" id="9809429at2"/>
<dbReference type="UniPathway" id="UPA00109">
    <property type="reaction ID" value="UER00189"/>
</dbReference>
<dbReference type="UniPathway" id="UPA00138"/>
<dbReference type="Proteomes" id="UP000000788">
    <property type="component" value="Chromosome"/>
</dbReference>
<dbReference type="GO" id="GO:0005829">
    <property type="term" value="C:cytosol"/>
    <property type="evidence" value="ECO:0007669"/>
    <property type="project" value="TreeGrafter"/>
</dbReference>
<dbReference type="GO" id="GO:0004807">
    <property type="term" value="F:triose-phosphate isomerase activity"/>
    <property type="evidence" value="ECO:0007669"/>
    <property type="project" value="UniProtKB-UniRule"/>
</dbReference>
<dbReference type="GO" id="GO:0006094">
    <property type="term" value="P:gluconeogenesis"/>
    <property type="evidence" value="ECO:0007669"/>
    <property type="project" value="UniProtKB-UniRule"/>
</dbReference>
<dbReference type="GO" id="GO:0046166">
    <property type="term" value="P:glyceraldehyde-3-phosphate biosynthetic process"/>
    <property type="evidence" value="ECO:0007669"/>
    <property type="project" value="TreeGrafter"/>
</dbReference>
<dbReference type="GO" id="GO:0019563">
    <property type="term" value="P:glycerol catabolic process"/>
    <property type="evidence" value="ECO:0007669"/>
    <property type="project" value="TreeGrafter"/>
</dbReference>
<dbReference type="GO" id="GO:0006096">
    <property type="term" value="P:glycolytic process"/>
    <property type="evidence" value="ECO:0007669"/>
    <property type="project" value="UniProtKB-UniRule"/>
</dbReference>
<dbReference type="CDD" id="cd00311">
    <property type="entry name" value="TIM"/>
    <property type="match status" value="1"/>
</dbReference>
<dbReference type="FunFam" id="3.20.20.70:FF:000016">
    <property type="entry name" value="Triosephosphate isomerase"/>
    <property type="match status" value="1"/>
</dbReference>
<dbReference type="Gene3D" id="3.20.20.70">
    <property type="entry name" value="Aldolase class I"/>
    <property type="match status" value="1"/>
</dbReference>
<dbReference type="HAMAP" id="MF_00147_B">
    <property type="entry name" value="TIM_B"/>
    <property type="match status" value="1"/>
</dbReference>
<dbReference type="InterPro" id="IPR013785">
    <property type="entry name" value="Aldolase_TIM"/>
</dbReference>
<dbReference type="InterPro" id="IPR035990">
    <property type="entry name" value="TIM_sf"/>
</dbReference>
<dbReference type="InterPro" id="IPR022896">
    <property type="entry name" value="TrioseP_Isoase_bac/euk"/>
</dbReference>
<dbReference type="InterPro" id="IPR000652">
    <property type="entry name" value="Triosephosphate_isomerase"/>
</dbReference>
<dbReference type="InterPro" id="IPR020861">
    <property type="entry name" value="Triosephosphate_isomerase_AS"/>
</dbReference>
<dbReference type="NCBIfam" id="TIGR00419">
    <property type="entry name" value="tim"/>
    <property type="match status" value="1"/>
</dbReference>
<dbReference type="PANTHER" id="PTHR21139">
    <property type="entry name" value="TRIOSEPHOSPHATE ISOMERASE"/>
    <property type="match status" value="1"/>
</dbReference>
<dbReference type="PANTHER" id="PTHR21139:SF42">
    <property type="entry name" value="TRIOSEPHOSPHATE ISOMERASE"/>
    <property type="match status" value="1"/>
</dbReference>
<dbReference type="Pfam" id="PF00121">
    <property type="entry name" value="TIM"/>
    <property type="match status" value="1"/>
</dbReference>
<dbReference type="SUPFAM" id="SSF51351">
    <property type="entry name" value="Triosephosphate isomerase (TIM)"/>
    <property type="match status" value="1"/>
</dbReference>
<dbReference type="PROSITE" id="PS00171">
    <property type="entry name" value="TIM_1"/>
    <property type="match status" value="1"/>
</dbReference>
<dbReference type="PROSITE" id="PS51440">
    <property type="entry name" value="TIM_2"/>
    <property type="match status" value="1"/>
</dbReference>
<name>TPIS_PROM4</name>
<sequence>MSKTVIAGNWKMHMTCAQARDFISAYLPLIKNVPKGRELVLAPPFTAISTLSEILKGSNVSLSSQNVHWEDNGAFTAEISPKMLLEHSVSYAIVGHSEPRKYFSESDKQINLRAKSAQANGLIPIVCVGETIEQRERGEAERVIRRQVEQGLEETDKKKLIVAYEPIWAIGTGKTCEANEANRICGLIRQWANCPEILIQYGGSVKPGNIDEIMAMSDIDGVLVGGASLDPESFARISNYKVE</sequence>
<accession>A9BAK7</accession>
<gene>
    <name evidence="1" type="primary">tpiA</name>
    <name type="ordered locus">P9211_09381</name>
</gene>
<protein>
    <recommendedName>
        <fullName evidence="1">Triosephosphate isomerase</fullName>
        <shortName evidence="1">TIM</shortName>
        <shortName evidence="1">TPI</shortName>
        <ecNumber evidence="1">5.3.1.1</ecNumber>
    </recommendedName>
    <alternativeName>
        <fullName evidence="1">Triose-phosphate isomerase</fullName>
    </alternativeName>
</protein>
<proteinExistence type="inferred from homology"/>
<keyword id="KW-0963">Cytoplasm</keyword>
<keyword id="KW-0312">Gluconeogenesis</keyword>
<keyword id="KW-0324">Glycolysis</keyword>
<keyword id="KW-0413">Isomerase</keyword>
<keyword id="KW-1185">Reference proteome</keyword>
<feature type="chain" id="PRO_1000096522" description="Triosephosphate isomerase">
    <location>
        <begin position="1"/>
        <end position="243"/>
    </location>
</feature>
<feature type="active site" description="Electrophile" evidence="1">
    <location>
        <position position="96"/>
    </location>
</feature>
<feature type="active site" description="Proton acceptor" evidence="1">
    <location>
        <position position="165"/>
    </location>
</feature>
<feature type="binding site" evidence="1">
    <location>
        <begin position="9"/>
        <end position="11"/>
    </location>
    <ligand>
        <name>substrate</name>
    </ligand>
</feature>
<feature type="binding site" evidence="1">
    <location>
        <position position="171"/>
    </location>
    <ligand>
        <name>substrate</name>
    </ligand>
</feature>
<feature type="binding site" evidence="1">
    <location>
        <position position="204"/>
    </location>
    <ligand>
        <name>substrate</name>
    </ligand>
</feature>
<feature type="binding site" evidence="1">
    <location>
        <begin position="225"/>
        <end position="226"/>
    </location>
    <ligand>
        <name>substrate</name>
    </ligand>
</feature>
<comment type="function">
    <text evidence="1">Involved in the gluconeogenesis. Catalyzes stereospecifically the conversion of dihydroxyacetone phosphate (DHAP) to D-glyceraldehyde-3-phosphate (G3P).</text>
</comment>
<comment type="catalytic activity">
    <reaction evidence="1">
        <text>D-glyceraldehyde 3-phosphate = dihydroxyacetone phosphate</text>
        <dbReference type="Rhea" id="RHEA:18585"/>
        <dbReference type="ChEBI" id="CHEBI:57642"/>
        <dbReference type="ChEBI" id="CHEBI:59776"/>
        <dbReference type="EC" id="5.3.1.1"/>
    </reaction>
</comment>
<comment type="pathway">
    <text evidence="1">Carbohydrate biosynthesis; gluconeogenesis.</text>
</comment>
<comment type="pathway">
    <text evidence="1">Carbohydrate degradation; glycolysis; D-glyceraldehyde 3-phosphate from glycerone phosphate: step 1/1.</text>
</comment>
<comment type="subunit">
    <text evidence="1">Homodimer.</text>
</comment>
<comment type="subcellular location">
    <subcellularLocation>
        <location evidence="1">Cytoplasm</location>
    </subcellularLocation>
</comment>
<comment type="similarity">
    <text evidence="1">Belongs to the triosephosphate isomerase family.</text>
</comment>
<evidence type="ECO:0000255" key="1">
    <source>
        <dbReference type="HAMAP-Rule" id="MF_00147"/>
    </source>
</evidence>
<organism>
    <name type="scientific">Prochlorococcus marinus (strain MIT 9211)</name>
    <dbReference type="NCBI Taxonomy" id="93059"/>
    <lineage>
        <taxon>Bacteria</taxon>
        <taxon>Bacillati</taxon>
        <taxon>Cyanobacteriota</taxon>
        <taxon>Cyanophyceae</taxon>
        <taxon>Synechococcales</taxon>
        <taxon>Prochlorococcaceae</taxon>
        <taxon>Prochlorococcus</taxon>
    </lineage>
</organism>